<protein>
    <recommendedName>
        <fullName evidence="1">Phosphatidylglycerol--prolipoprotein diacylglyceryl transferase</fullName>
        <ecNumber evidence="1">2.5.1.145</ecNumber>
    </recommendedName>
</protein>
<reference key="1">
    <citation type="submission" date="2005-08" db="EMBL/GenBank/DDBJ databases">
        <title>Complete sequence of Synechococcus sp. CC9902.</title>
        <authorList>
            <person name="Copeland A."/>
            <person name="Lucas S."/>
            <person name="Lapidus A."/>
            <person name="Barry K."/>
            <person name="Detter J.C."/>
            <person name="Glavina T."/>
            <person name="Hammon N."/>
            <person name="Israni S."/>
            <person name="Pitluck S."/>
            <person name="Martinez M."/>
            <person name="Schmutz J."/>
            <person name="Larimer F."/>
            <person name="Land M."/>
            <person name="Kyrpides N."/>
            <person name="Ivanova N."/>
            <person name="Richardson P."/>
        </authorList>
    </citation>
    <scope>NUCLEOTIDE SEQUENCE [LARGE SCALE GENOMIC DNA]</scope>
    <source>
        <strain>CC9902</strain>
    </source>
</reference>
<gene>
    <name evidence="1" type="primary">lgt</name>
    <name type="ordered locus">Syncc9902_1736</name>
</gene>
<comment type="function">
    <text evidence="1">Catalyzes the transfer of the diacylglyceryl group from phosphatidylglycerol to the sulfhydryl group of the N-terminal cysteine of a prolipoprotein, the first step in the formation of mature lipoproteins.</text>
</comment>
<comment type="catalytic activity">
    <reaction evidence="1">
        <text>L-cysteinyl-[prolipoprotein] + a 1,2-diacyl-sn-glycero-3-phospho-(1'-sn-glycerol) = an S-1,2-diacyl-sn-glyceryl-L-cysteinyl-[prolipoprotein] + sn-glycerol 1-phosphate + H(+)</text>
        <dbReference type="Rhea" id="RHEA:56712"/>
        <dbReference type="Rhea" id="RHEA-COMP:14679"/>
        <dbReference type="Rhea" id="RHEA-COMP:14680"/>
        <dbReference type="ChEBI" id="CHEBI:15378"/>
        <dbReference type="ChEBI" id="CHEBI:29950"/>
        <dbReference type="ChEBI" id="CHEBI:57685"/>
        <dbReference type="ChEBI" id="CHEBI:64716"/>
        <dbReference type="ChEBI" id="CHEBI:140658"/>
        <dbReference type="EC" id="2.5.1.145"/>
    </reaction>
</comment>
<comment type="pathway">
    <text evidence="1">Protein modification; lipoprotein biosynthesis (diacylglyceryl transfer).</text>
</comment>
<comment type="subcellular location">
    <subcellularLocation>
        <location evidence="1">Cell inner membrane</location>
        <topology evidence="1">Multi-pass membrane protein</topology>
    </subcellularLocation>
</comment>
<comment type="similarity">
    <text evidence="1">Belongs to the Lgt family.</text>
</comment>
<accession>Q3AWL5</accession>
<organism>
    <name type="scientific">Synechococcus sp. (strain CC9902)</name>
    <dbReference type="NCBI Taxonomy" id="316279"/>
    <lineage>
        <taxon>Bacteria</taxon>
        <taxon>Bacillati</taxon>
        <taxon>Cyanobacteriota</taxon>
        <taxon>Cyanophyceae</taxon>
        <taxon>Synechococcales</taxon>
        <taxon>Synechococcaceae</taxon>
        <taxon>Synechococcus</taxon>
    </lineage>
</organism>
<sequence length="280" mass="31282">MFASPGPELFQFGPFVLRWYGLLIAAAVLIGLNLSSSLAQQRKLENGLISDLLPLLVLFSVIGARIYYVAFEWHNYAATPLKALAIWEGGIAIHGALIAGTLTLILFCRWRQQSFWDVLDVLVPSVALGQSIGRWGNFFNSEAFGIPTDLPWKLFIPEQNRPIIYVNQEFFHPTFLYESLWNLALFIILILLFRWGSKHLNKLPAGAMSCIYLMGYSLGRVWIEGLRIDSLCIGALPPACEGGLRIAQLMSGVMALAGSLGLWWLYGRKKPLPDPGFRPN</sequence>
<dbReference type="EC" id="2.5.1.145" evidence="1"/>
<dbReference type="EMBL" id="CP000097">
    <property type="protein sequence ID" value="ABB26693.1"/>
    <property type="molecule type" value="Genomic_DNA"/>
</dbReference>
<dbReference type="RefSeq" id="WP_011360500.1">
    <property type="nucleotide sequence ID" value="NC_007513.1"/>
</dbReference>
<dbReference type="SMR" id="Q3AWL5"/>
<dbReference type="STRING" id="316279.Syncc9902_1736"/>
<dbReference type="KEGG" id="sye:Syncc9902_1736"/>
<dbReference type="eggNOG" id="COG0682">
    <property type="taxonomic scope" value="Bacteria"/>
</dbReference>
<dbReference type="HOGENOM" id="CLU_013386_1_2_3"/>
<dbReference type="OrthoDB" id="871140at2"/>
<dbReference type="UniPathway" id="UPA00664"/>
<dbReference type="Proteomes" id="UP000002712">
    <property type="component" value="Chromosome"/>
</dbReference>
<dbReference type="GO" id="GO:0005886">
    <property type="term" value="C:plasma membrane"/>
    <property type="evidence" value="ECO:0007669"/>
    <property type="project" value="UniProtKB-SubCell"/>
</dbReference>
<dbReference type="GO" id="GO:0008961">
    <property type="term" value="F:phosphatidylglycerol-prolipoprotein diacylglyceryl transferase activity"/>
    <property type="evidence" value="ECO:0007669"/>
    <property type="project" value="UniProtKB-UniRule"/>
</dbReference>
<dbReference type="GO" id="GO:0042158">
    <property type="term" value="P:lipoprotein biosynthetic process"/>
    <property type="evidence" value="ECO:0007669"/>
    <property type="project" value="UniProtKB-UniRule"/>
</dbReference>
<dbReference type="HAMAP" id="MF_01147">
    <property type="entry name" value="Lgt"/>
    <property type="match status" value="1"/>
</dbReference>
<dbReference type="InterPro" id="IPR001640">
    <property type="entry name" value="Lgt"/>
</dbReference>
<dbReference type="NCBIfam" id="TIGR00544">
    <property type="entry name" value="lgt"/>
    <property type="match status" value="1"/>
</dbReference>
<dbReference type="PANTHER" id="PTHR30589:SF0">
    <property type="entry name" value="PHOSPHATIDYLGLYCEROL--PROLIPOPROTEIN DIACYLGLYCERYL TRANSFERASE"/>
    <property type="match status" value="1"/>
</dbReference>
<dbReference type="PANTHER" id="PTHR30589">
    <property type="entry name" value="PROLIPOPROTEIN DIACYLGLYCERYL TRANSFERASE"/>
    <property type="match status" value="1"/>
</dbReference>
<dbReference type="Pfam" id="PF01790">
    <property type="entry name" value="LGT"/>
    <property type="match status" value="1"/>
</dbReference>
<dbReference type="PROSITE" id="PS01311">
    <property type="entry name" value="LGT"/>
    <property type="match status" value="1"/>
</dbReference>
<feature type="chain" id="PRO_1000053519" description="Phosphatidylglycerol--prolipoprotein diacylglyceryl transferase">
    <location>
        <begin position="1"/>
        <end position="280"/>
    </location>
</feature>
<feature type="transmembrane region" description="Helical" evidence="1">
    <location>
        <begin position="12"/>
        <end position="32"/>
    </location>
</feature>
<feature type="transmembrane region" description="Helical" evidence="1">
    <location>
        <begin position="52"/>
        <end position="72"/>
    </location>
</feature>
<feature type="transmembrane region" description="Helical" evidence="1">
    <location>
        <begin position="86"/>
        <end position="106"/>
    </location>
</feature>
<feature type="transmembrane region" description="Helical" evidence="1">
    <location>
        <begin position="115"/>
        <end position="133"/>
    </location>
</feature>
<feature type="transmembrane region" description="Helical" evidence="1">
    <location>
        <begin position="173"/>
        <end position="193"/>
    </location>
</feature>
<feature type="transmembrane region" description="Helical" evidence="1">
    <location>
        <begin position="203"/>
        <end position="223"/>
    </location>
</feature>
<feature type="transmembrane region" description="Helical" evidence="1">
    <location>
        <begin position="246"/>
        <end position="266"/>
    </location>
</feature>
<feature type="binding site" evidence="1">
    <location>
        <position position="134"/>
    </location>
    <ligand>
        <name>a 1,2-diacyl-sn-glycero-3-phospho-(1'-sn-glycerol)</name>
        <dbReference type="ChEBI" id="CHEBI:64716"/>
    </ligand>
</feature>
<evidence type="ECO:0000255" key="1">
    <source>
        <dbReference type="HAMAP-Rule" id="MF_01147"/>
    </source>
</evidence>
<keyword id="KW-0997">Cell inner membrane</keyword>
<keyword id="KW-1003">Cell membrane</keyword>
<keyword id="KW-0472">Membrane</keyword>
<keyword id="KW-1185">Reference proteome</keyword>
<keyword id="KW-0808">Transferase</keyword>
<keyword id="KW-0812">Transmembrane</keyword>
<keyword id="KW-1133">Transmembrane helix</keyword>
<proteinExistence type="inferred from homology"/>
<name>LGT_SYNS9</name>